<evidence type="ECO:0000250" key="1">
    <source>
        <dbReference type="UniProtKB" id="O35165"/>
    </source>
</evidence>
<evidence type="ECO:0000250" key="2">
    <source>
        <dbReference type="UniProtKB" id="P41941"/>
    </source>
</evidence>
<evidence type="ECO:0000255" key="3"/>
<evidence type="ECO:0000305" key="4"/>
<evidence type="ECO:0000312" key="5">
    <source>
        <dbReference type="WormBase" id="CBG16136"/>
    </source>
</evidence>
<dbReference type="EMBL" id="HE600961">
    <property type="protein sequence ID" value="CAP34254.3"/>
    <property type="molecule type" value="Genomic_DNA"/>
</dbReference>
<dbReference type="SMR" id="A8XP14"/>
<dbReference type="FunCoup" id="A8XP14">
    <property type="interactions" value="3084"/>
</dbReference>
<dbReference type="STRING" id="6238.A8XP14"/>
<dbReference type="KEGG" id="cbr:CBG_16136"/>
<dbReference type="CTD" id="8585468"/>
<dbReference type="WormBase" id="CBG16136">
    <property type="protein sequence ID" value="CBP30258"/>
    <property type="gene ID" value="WBGene00036173"/>
    <property type="gene designation" value="Cbr-memb-1"/>
</dbReference>
<dbReference type="eggNOG" id="KOG3251">
    <property type="taxonomic scope" value="Eukaryota"/>
</dbReference>
<dbReference type="HOGENOM" id="CLU_083740_0_0_1"/>
<dbReference type="InParanoid" id="A8XP14"/>
<dbReference type="OMA" id="LKYDSRH"/>
<dbReference type="Proteomes" id="UP000008549">
    <property type="component" value="Unassembled WGS sequence"/>
</dbReference>
<dbReference type="GO" id="GO:0005789">
    <property type="term" value="C:endoplasmic reticulum membrane"/>
    <property type="evidence" value="ECO:0000318"/>
    <property type="project" value="GO_Central"/>
</dbReference>
<dbReference type="GO" id="GO:0012507">
    <property type="term" value="C:ER to Golgi transport vesicle membrane"/>
    <property type="evidence" value="ECO:0000318"/>
    <property type="project" value="GO_Central"/>
</dbReference>
<dbReference type="GO" id="GO:0005794">
    <property type="term" value="C:Golgi apparatus"/>
    <property type="evidence" value="ECO:0000318"/>
    <property type="project" value="GO_Central"/>
</dbReference>
<dbReference type="GO" id="GO:0000139">
    <property type="term" value="C:Golgi membrane"/>
    <property type="evidence" value="ECO:0007669"/>
    <property type="project" value="UniProtKB-SubCell"/>
</dbReference>
<dbReference type="GO" id="GO:0031902">
    <property type="term" value="C:late endosome membrane"/>
    <property type="evidence" value="ECO:0000318"/>
    <property type="project" value="GO_Central"/>
</dbReference>
<dbReference type="GO" id="GO:0031201">
    <property type="term" value="C:SNARE complex"/>
    <property type="evidence" value="ECO:0000318"/>
    <property type="project" value="GO_Central"/>
</dbReference>
<dbReference type="GO" id="GO:0005484">
    <property type="term" value="F:SNAP receptor activity"/>
    <property type="evidence" value="ECO:0000318"/>
    <property type="project" value="GO_Central"/>
</dbReference>
<dbReference type="GO" id="GO:0000149">
    <property type="term" value="F:SNARE binding"/>
    <property type="evidence" value="ECO:0000318"/>
    <property type="project" value="GO_Central"/>
</dbReference>
<dbReference type="GO" id="GO:0015031">
    <property type="term" value="P:protein transport"/>
    <property type="evidence" value="ECO:0007669"/>
    <property type="project" value="UniProtKB-KW"/>
</dbReference>
<dbReference type="GO" id="GO:0006906">
    <property type="term" value="P:vesicle fusion"/>
    <property type="evidence" value="ECO:0000318"/>
    <property type="project" value="GO_Central"/>
</dbReference>
<dbReference type="CDD" id="cd15863">
    <property type="entry name" value="SNARE_GS27"/>
    <property type="match status" value="1"/>
</dbReference>
<dbReference type="FunFam" id="1.20.5.110:FF:000054">
    <property type="entry name" value="Protein transport protein BOS1"/>
    <property type="match status" value="1"/>
</dbReference>
<dbReference type="Gene3D" id="1.20.5.110">
    <property type="match status" value="1"/>
</dbReference>
<dbReference type="InterPro" id="IPR027027">
    <property type="entry name" value="GOSR2/Membrin/Bos1"/>
</dbReference>
<dbReference type="PANTHER" id="PTHR21230:SF1">
    <property type="entry name" value="GOLGI SNAP RECEPTOR COMPLEX MEMBER 2"/>
    <property type="match status" value="1"/>
</dbReference>
<dbReference type="PANTHER" id="PTHR21230">
    <property type="entry name" value="VESICLE TRANSPORT V-SNARE PROTEIN VTI1-RELATED"/>
    <property type="match status" value="1"/>
</dbReference>
<dbReference type="Pfam" id="PF12352">
    <property type="entry name" value="V-SNARE_C"/>
    <property type="match status" value="1"/>
</dbReference>
<dbReference type="PIRSF" id="PIRSF028865">
    <property type="entry name" value="Membrin-2"/>
    <property type="match status" value="1"/>
</dbReference>
<dbReference type="SUPFAM" id="SSF58038">
    <property type="entry name" value="SNARE fusion complex"/>
    <property type="match status" value="1"/>
</dbReference>
<name>GOSR2_CAEBR</name>
<gene>
    <name evidence="5" type="primary">memb-1</name>
    <name evidence="5" type="synonym">gosr-2.1</name>
    <name evidence="5" type="ORF">CBG16136</name>
</gene>
<comment type="function">
    <text evidence="1">Involved in transport of proteins from the cis/medial-Golgi to the trans-Golgi network.</text>
</comment>
<comment type="subunit">
    <text evidence="1">Part of a unique SNARE complex.</text>
</comment>
<comment type="subcellular location">
    <subcellularLocation>
        <location evidence="1">Golgi apparatus</location>
        <location evidence="1">cis-Golgi network membrane</location>
        <topology evidence="3">Single-pass type IV membrane protein</topology>
    </subcellularLocation>
    <subcellularLocation>
        <location evidence="1">Golgi apparatus membrane</location>
    </subcellularLocation>
    <subcellularLocation>
        <location evidence="1">Endoplasmic reticulum membrane</location>
    </subcellularLocation>
    <text evidence="1">Concentrated most in the intermediate compartment/cis-Golgi network and the cis-Golgi cisternae 1 and 2. Greatly reduced in concentration at the trans end of the Golgi apparatus.</text>
</comment>
<comment type="similarity">
    <text evidence="3">Belongs to the GOSR2 family.</text>
</comment>
<organism>
    <name type="scientific">Caenorhabditis briggsae</name>
    <dbReference type="NCBI Taxonomy" id="6238"/>
    <lineage>
        <taxon>Eukaryota</taxon>
        <taxon>Metazoa</taxon>
        <taxon>Ecdysozoa</taxon>
        <taxon>Nematoda</taxon>
        <taxon>Chromadorea</taxon>
        <taxon>Rhabditida</taxon>
        <taxon>Rhabditina</taxon>
        <taxon>Rhabditomorpha</taxon>
        <taxon>Rhabditoidea</taxon>
        <taxon>Rhabditidae</taxon>
        <taxon>Peloderinae</taxon>
        <taxon>Caenorhabditis</taxon>
    </lineage>
</organism>
<keyword id="KW-0256">Endoplasmic reticulum</keyword>
<keyword id="KW-0333">Golgi apparatus</keyword>
<keyword id="KW-0472">Membrane</keyword>
<keyword id="KW-0653">Protein transport</keyword>
<keyword id="KW-1185">Reference proteome</keyword>
<keyword id="KW-0812">Transmembrane</keyword>
<keyword id="KW-1133">Transmembrane helix</keyword>
<keyword id="KW-0813">Transport</keyword>
<reference key="1">
    <citation type="journal article" date="2003" name="PLoS Biol.">
        <title>The genome sequence of Caenorhabditis briggsae: a platform for comparative genomics.</title>
        <authorList>
            <person name="Stein L.D."/>
            <person name="Bao Z."/>
            <person name="Blasiar D."/>
            <person name="Blumenthal T."/>
            <person name="Brent M.R."/>
            <person name="Chen N."/>
            <person name="Chinwalla A."/>
            <person name="Clarke L."/>
            <person name="Clee C."/>
            <person name="Coghlan A."/>
            <person name="Coulson A."/>
            <person name="D'Eustachio P."/>
            <person name="Fitch D.H.A."/>
            <person name="Fulton L.A."/>
            <person name="Fulton R.E."/>
            <person name="Griffiths-Jones S."/>
            <person name="Harris T.W."/>
            <person name="Hillier L.W."/>
            <person name="Kamath R."/>
            <person name="Kuwabara P.E."/>
            <person name="Mardis E.R."/>
            <person name="Marra M.A."/>
            <person name="Miner T.L."/>
            <person name="Minx P."/>
            <person name="Mullikin J.C."/>
            <person name="Plumb R.W."/>
            <person name="Rogers J."/>
            <person name="Schein J.E."/>
            <person name="Sohrmann M."/>
            <person name="Spieth J."/>
            <person name="Stajich J.E."/>
            <person name="Wei C."/>
            <person name="Willey D."/>
            <person name="Wilson R.K."/>
            <person name="Durbin R.M."/>
            <person name="Waterston R.H."/>
        </authorList>
    </citation>
    <scope>NUCLEOTIDE SEQUENCE [LARGE SCALE GENOMIC DNA]</scope>
    <source>
        <strain>AF16</strain>
    </source>
</reference>
<protein>
    <recommendedName>
        <fullName evidence="2">Golgi SNAP receptor complex member 2 homolog memb-1</fullName>
    </recommendedName>
</protein>
<feature type="chain" id="PRO_0000351209" description="Golgi SNAP receptor complex member 2 homolog memb-1" evidence="4">
    <location>
        <begin position="1"/>
        <end position="212"/>
    </location>
</feature>
<feature type="topological domain" description="Cytoplasmic" evidence="3">
    <location>
        <begin position="1"/>
        <end position="189"/>
    </location>
</feature>
<feature type="transmembrane region" description="Helical; Anchor for type IV membrane protein" evidence="3">
    <location>
        <begin position="190"/>
        <end position="210"/>
    </location>
</feature>
<feature type="topological domain" description="Vesicular" evidence="3">
    <location>
        <begin position="211"/>
        <end position="212"/>
    </location>
</feature>
<sequence length="212" mass="24568">MEAQYQSTNFLLQKVQHDLGRLEGTQNEQDAQVVVQSIYGDISTLKDNLQALDNYVSREQPARRQAARMRVDQLRMDVQRVDMAVSAVHTRMTQRWRSASEREELLSARYRPNDTALSIGDHELQLNDRLHSSHNRLDELISQGSAVLDNLKSQHFSLRGVSRKMHDIGQALGLSNSTLQVIDRRVREDWIFVIGCIVCCIFMYAFYRFWRG</sequence>
<proteinExistence type="inferred from homology"/>
<accession>A8XP14</accession>